<dbReference type="EMBL" id="X16093">
    <property type="protein sequence ID" value="CAA34222.1"/>
    <property type="molecule type" value="Genomic_DNA"/>
</dbReference>
<dbReference type="PIR" id="S06541">
    <property type="entry name" value="Z1BPHK"/>
</dbReference>
<dbReference type="GO" id="GO:0003677">
    <property type="term" value="F:DNA binding"/>
    <property type="evidence" value="ECO:0007669"/>
    <property type="project" value="UniProtKB-KW"/>
</dbReference>
<dbReference type="CDD" id="cd00093">
    <property type="entry name" value="HTH_XRE"/>
    <property type="match status" value="1"/>
</dbReference>
<dbReference type="CDD" id="cd06529">
    <property type="entry name" value="S24_LexA-like"/>
    <property type="match status" value="1"/>
</dbReference>
<dbReference type="Gene3D" id="1.10.260.40">
    <property type="entry name" value="lambda repressor-like DNA-binding domains"/>
    <property type="match status" value="1"/>
</dbReference>
<dbReference type="Gene3D" id="2.10.109.10">
    <property type="entry name" value="Umud Fragment, subunit A"/>
    <property type="match status" value="1"/>
</dbReference>
<dbReference type="InterPro" id="IPR001387">
    <property type="entry name" value="Cro/C1-type_HTH"/>
</dbReference>
<dbReference type="InterPro" id="IPR010982">
    <property type="entry name" value="Lambda_DNA-bd_dom_sf"/>
</dbReference>
<dbReference type="InterPro" id="IPR039418">
    <property type="entry name" value="LexA-like"/>
</dbReference>
<dbReference type="InterPro" id="IPR036286">
    <property type="entry name" value="LexA/Signal_pep-like_sf"/>
</dbReference>
<dbReference type="InterPro" id="IPR015927">
    <property type="entry name" value="Peptidase_S24_S26A/B/C"/>
</dbReference>
<dbReference type="PANTHER" id="PTHR40661">
    <property type="match status" value="1"/>
</dbReference>
<dbReference type="PANTHER" id="PTHR40661:SF3">
    <property type="entry name" value="FELS-1 PROPHAGE TRANSCRIPTIONAL REGULATOR"/>
    <property type="match status" value="1"/>
</dbReference>
<dbReference type="Pfam" id="PF01381">
    <property type="entry name" value="HTH_3"/>
    <property type="match status" value="1"/>
</dbReference>
<dbReference type="Pfam" id="PF00717">
    <property type="entry name" value="Peptidase_S24"/>
    <property type="match status" value="1"/>
</dbReference>
<dbReference type="SMART" id="SM00530">
    <property type="entry name" value="HTH_XRE"/>
    <property type="match status" value="1"/>
</dbReference>
<dbReference type="SUPFAM" id="SSF47413">
    <property type="entry name" value="lambda repressor-like DNA-binding domains"/>
    <property type="match status" value="1"/>
</dbReference>
<dbReference type="SUPFAM" id="SSF51306">
    <property type="entry name" value="LexA/Signal peptidase"/>
    <property type="match status" value="1"/>
</dbReference>
<dbReference type="PROSITE" id="PS50943">
    <property type="entry name" value="HTH_CROC1"/>
    <property type="match status" value="1"/>
</dbReference>
<proteinExistence type="predicted"/>
<feature type="chain" id="PRO_0000149711" description="26 kDa repressor protein">
    <location>
        <begin position="1"/>
        <end position="235"/>
    </location>
</feature>
<feature type="domain" description="HTH cro/C1-type" evidence="1">
    <location>
        <begin position="14"/>
        <end position="72"/>
    </location>
</feature>
<feature type="DNA-binding region" description="H-T-H motif" evidence="1">
    <location>
        <begin position="25"/>
        <end position="44"/>
    </location>
</feature>
<evidence type="ECO:0000255" key="1">
    <source>
        <dbReference type="PROSITE-ProRule" id="PRU00257"/>
    </source>
</evidence>
<protein>
    <recommendedName>
        <fullName>26 kDa repressor protein</fullName>
    </recommendedName>
    <alternativeName>
        <fullName>Regulatory protein CI</fullName>
    </alternativeName>
</protein>
<organism>
    <name type="scientific">Escherichia phage HK022</name>
    <name type="common">Bacteriophage HK022</name>
    <dbReference type="NCBI Taxonomy" id="10742"/>
    <lineage>
        <taxon>Viruses</taxon>
        <taxon>Duplodnaviria</taxon>
        <taxon>Heunggongvirae</taxon>
        <taxon>Uroviricota</taxon>
        <taxon>Caudoviricetes</taxon>
        <taxon>Hendrixvirinae</taxon>
        <taxon>Shamshuipovirus</taxon>
    </lineage>
</organism>
<gene>
    <name type="primary">CI-HTT</name>
</gene>
<organismHost>
    <name type="scientific">Escherichia coli</name>
    <dbReference type="NCBI Taxonomy" id="562"/>
</organismHost>
<sequence>MVQQKERETFSQRLALACDKAGLPLHGRQADLAVRLKVTPKAISKWFNGESIPRKDKMESLASVLGTTAAYLHGYADDDGITVNHLSRSNDYYRVDVLDVQASAGPGTMVSNEFIEKIRAIEYTTEQARILFNGRPQESVKVITVRGDSMEGTINPGDEIFVDVSITCFDGDGIYVFVYGKTMHVKRLQMQKNRLAVISDNAAYDRWYIEEGEEEQLHILAKVLIRQSIDYKRFG</sequence>
<keyword id="KW-0238">DNA-binding</keyword>
<keyword id="KW-0678">Repressor</keyword>
<keyword id="KW-0804">Transcription</keyword>
<keyword id="KW-0805">Transcription regulation</keyword>
<name>RPC1_BPHK0</name>
<accession>P18680</accession>
<reference key="1">
    <citation type="journal article" date="1989" name="J. Mol. Biol.">
        <title>Structure and function of the nun gene and the immunity region of the lambdoid phage HK022.</title>
        <authorList>
            <person name="Oberto J."/>
            <person name="Weisberg R.A."/>
            <person name="Gottesman M.E."/>
        </authorList>
    </citation>
    <scope>NUCLEOTIDE SEQUENCE [GENOMIC DNA]</scope>
</reference>
<reference key="2">
    <citation type="submission" date="1993-12" db="EMBL/GenBank/DDBJ databases">
        <authorList>
            <person name="Oberto J."/>
        </authorList>
    </citation>
    <scope>SEQUENCE REVISION TO C-TERMINUS</scope>
</reference>